<comment type="function">
    <text evidence="1">Catalyzes the reduction of FMN to FMNH2 which is used to reduce pyrimidine by RutA via the Rut pathway.</text>
</comment>
<comment type="catalytic activity">
    <reaction evidence="1">
        <text>FMNH2 + NAD(+) = FMN + NADH + 2 H(+)</text>
        <dbReference type="Rhea" id="RHEA:21620"/>
        <dbReference type="ChEBI" id="CHEBI:15378"/>
        <dbReference type="ChEBI" id="CHEBI:57540"/>
        <dbReference type="ChEBI" id="CHEBI:57618"/>
        <dbReference type="ChEBI" id="CHEBI:57945"/>
        <dbReference type="ChEBI" id="CHEBI:58210"/>
        <dbReference type="EC" id="1.5.1.42"/>
    </reaction>
</comment>
<comment type="similarity">
    <text evidence="1">Belongs to the non-flavoprotein flavin reductase family. RutF subfamily.</text>
</comment>
<dbReference type="EC" id="1.5.1.42" evidence="1"/>
<dbReference type="EMBL" id="CP000783">
    <property type="protein sequence ID" value="ABU77614.1"/>
    <property type="molecule type" value="Genomic_DNA"/>
</dbReference>
<dbReference type="RefSeq" id="WP_012125167.1">
    <property type="nucleotide sequence ID" value="NC_009778.1"/>
</dbReference>
<dbReference type="SMR" id="A7MFX8"/>
<dbReference type="KEGG" id="esa:ESA_02367"/>
<dbReference type="PATRIC" id="fig|290339.8.peg.2097"/>
<dbReference type="HOGENOM" id="CLU_059021_2_2_6"/>
<dbReference type="Proteomes" id="UP000000260">
    <property type="component" value="Chromosome"/>
</dbReference>
<dbReference type="GO" id="GO:0010181">
    <property type="term" value="F:FMN binding"/>
    <property type="evidence" value="ECO:0007669"/>
    <property type="project" value="InterPro"/>
</dbReference>
<dbReference type="GO" id="GO:0052874">
    <property type="term" value="F:FMN reductase (NADH) activity"/>
    <property type="evidence" value="ECO:0007669"/>
    <property type="project" value="UniProtKB-EC"/>
</dbReference>
<dbReference type="GO" id="GO:0008752">
    <property type="term" value="F:FMN reductase [NAD(P)H] activity"/>
    <property type="evidence" value="ECO:0007669"/>
    <property type="project" value="InterPro"/>
</dbReference>
<dbReference type="GO" id="GO:0042602">
    <property type="term" value="F:riboflavin reductase (NADPH) activity"/>
    <property type="evidence" value="ECO:0007669"/>
    <property type="project" value="UniProtKB-UniRule"/>
</dbReference>
<dbReference type="GO" id="GO:0019740">
    <property type="term" value="P:nitrogen utilization"/>
    <property type="evidence" value="ECO:0007669"/>
    <property type="project" value="UniProtKB-UniRule"/>
</dbReference>
<dbReference type="GO" id="GO:0006212">
    <property type="term" value="P:uracil catabolic process"/>
    <property type="evidence" value="ECO:0007669"/>
    <property type="project" value="UniProtKB-UniRule"/>
</dbReference>
<dbReference type="FunFam" id="2.30.110.10:FF:000002">
    <property type="entry name" value="FMN reductase (NADH) RutF"/>
    <property type="match status" value="1"/>
</dbReference>
<dbReference type="Gene3D" id="2.30.110.10">
    <property type="entry name" value="Electron Transport, Fmn-binding Protein, Chain A"/>
    <property type="match status" value="1"/>
</dbReference>
<dbReference type="HAMAP" id="MF_00833">
    <property type="entry name" value="RutF"/>
    <property type="match status" value="1"/>
</dbReference>
<dbReference type="InterPro" id="IPR002563">
    <property type="entry name" value="Flavin_Rdtase-like_dom"/>
</dbReference>
<dbReference type="InterPro" id="IPR050268">
    <property type="entry name" value="NADH-dep_flavin_reductase"/>
</dbReference>
<dbReference type="InterPro" id="IPR019917">
    <property type="entry name" value="RutF"/>
</dbReference>
<dbReference type="InterPro" id="IPR012349">
    <property type="entry name" value="Split_barrel_FMN-bd"/>
</dbReference>
<dbReference type="NCBIfam" id="TIGR03615">
    <property type="entry name" value="RutF"/>
    <property type="match status" value="1"/>
</dbReference>
<dbReference type="PANTHER" id="PTHR30466">
    <property type="entry name" value="FLAVIN REDUCTASE"/>
    <property type="match status" value="1"/>
</dbReference>
<dbReference type="PANTHER" id="PTHR30466:SF1">
    <property type="entry name" value="FMN REDUCTASE (NADH) RUTF"/>
    <property type="match status" value="1"/>
</dbReference>
<dbReference type="Pfam" id="PF01613">
    <property type="entry name" value="Flavin_Reduct"/>
    <property type="match status" value="1"/>
</dbReference>
<dbReference type="SMART" id="SM00903">
    <property type="entry name" value="Flavin_Reduct"/>
    <property type="match status" value="1"/>
</dbReference>
<dbReference type="SUPFAM" id="SSF50475">
    <property type="entry name" value="FMN-binding split barrel"/>
    <property type="match status" value="1"/>
</dbReference>
<proteinExistence type="inferred from homology"/>
<sequence length="166" mass="17761">MSEQQAFRDAMSRLGAAVNIVTTDGPAGMAGFTASAVCSVTDSPPTLLVCLNRNASVWPVFQANGQLCVNTLAAGHEALSGLFGGKTPMEERFAAARWRRGVTGSPQLDGAVVSFDCRVEQVVPVSTHDVLLCRVLEISRNDDTHGLVWFDRRYHALSRPVCGLAS</sequence>
<protein>
    <recommendedName>
        <fullName evidence="1">FMN reductase (NADH) RutF</fullName>
        <ecNumber evidence="1">1.5.1.42</ecNumber>
    </recommendedName>
    <alternativeName>
        <fullName evidence="1">FMN reductase</fullName>
    </alternativeName>
    <alternativeName>
        <fullName evidence="1">NADH-flavin reductase RutF</fullName>
    </alternativeName>
    <alternativeName>
        <fullName evidence="1">NADH:flavin oxidoreductase</fullName>
    </alternativeName>
</protein>
<name>RUTF_CROS8</name>
<accession>A7MFX8</accession>
<reference key="1">
    <citation type="journal article" date="2010" name="PLoS ONE">
        <title>Genome sequence of Cronobacter sakazakii BAA-894 and comparative genomic hybridization analysis with other Cronobacter species.</title>
        <authorList>
            <person name="Kucerova E."/>
            <person name="Clifton S.W."/>
            <person name="Xia X.Q."/>
            <person name="Long F."/>
            <person name="Porwollik S."/>
            <person name="Fulton L."/>
            <person name="Fronick C."/>
            <person name="Minx P."/>
            <person name="Kyung K."/>
            <person name="Warren W."/>
            <person name="Fulton R."/>
            <person name="Feng D."/>
            <person name="Wollam A."/>
            <person name="Shah N."/>
            <person name="Bhonagiri V."/>
            <person name="Nash W.E."/>
            <person name="Hallsworth-Pepin K."/>
            <person name="Wilson R.K."/>
            <person name="McClelland M."/>
            <person name="Forsythe S.J."/>
        </authorList>
    </citation>
    <scope>NUCLEOTIDE SEQUENCE [LARGE SCALE GENOMIC DNA]</scope>
    <source>
        <strain>ATCC BAA-894</strain>
    </source>
</reference>
<keyword id="KW-0285">Flavoprotein</keyword>
<keyword id="KW-0288">FMN</keyword>
<keyword id="KW-0520">NAD</keyword>
<keyword id="KW-0560">Oxidoreductase</keyword>
<keyword id="KW-1185">Reference proteome</keyword>
<feature type="chain" id="PRO_0000402995" description="FMN reductase (NADH) RutF">
    <location>
        <begin position="1"/>
        <end position="166"/>
    </location>
</feature>
<evidence type="ECO:0000255" key="1">
    <source>
        <dbReference type="HAMAP-Rule" id="MF_00833"/>
    </source>
</evidence>
<gene>
    <name evidence="1" type="primary">rutF</name>
    <name type="ordered locus">ESA_02367</name>
</gene>
<organism>
    <name type="scientific">Cronobacter sakazakii (strain ATCC BAA-894)</name>
    <name type="common">Enterobacter sakazakii</name>
    <dbReference type="NCBI Taxonomy" id="290339"/>
    <lineage>
        <taxon>Bacteria</taxon>
        <taxon>Pseudomonadati</taxon>
        <taxon>Pseudomonadota</taxon>
        <taxon>Gammaproteobacteria</taxon>
        <taxon>Enterobacterales</taxon>
        <taxon>Enterobacteriaceae</taxon>
        <taxon>Cronobacter</taxon>
    </lineage>
</organism>